<sequence length="70" mass="8506">MTTIRVKENEPFDVALRRFKRTIEKLGLLTDLRAREFYEKPTAERKRKKAAAVKRHYKRVRSMQLPKKLY</sequence>
<evidence type="ECO:0000255" key="1">
    <source>
        <dbReference type="HAMAP-Rule" id="MF_00358"/>
    </source>
</evidence>
<evidence type="ECO:0000305" key="2"/>
<gene>
    <name evidence="1" type="primary">rpsU</name>
    <name type="ordered locus">Vapar_3540</name>
</gene>
<comment type="similarity">
    <text evidence="1">Belongs to the bacterial ribosomal protein bS21 family.</text>
</comment>
<dbReference type="EMBL" id="CP001635">
    <property type="protein sequence ID" value="ACS20157.1"/>
    <property type="molecule type" value="Genomic_DNA"/>
</dbReference>
<dbReference type="SMR" id="C5CTG9"/>
<dbReference type="STRING" id="543728.Vapar_3540"/>
<dbReference type="KEGG" id="vap:Vapar_3540"/>
<dbReference type="eggNOG" id="COG0828">
    <property type="taxonomic scope" value="Bacteria"/>
</dbReference>
<dbReference type="HOGENOM" id="CLU_159258_1_2_4"/>
<dbReference type="OrthoDB" id="9799244at2"/>
<dbReference type="GO" id="GO:1990904">
    <property type="term" value="C:ribonucleoprotein complex"/>
    <property type="evidence" value="ECO:0007669"/>
    <property type="project" value="UniProtKB-KW"/>
</dbReference>
<dbReference type="GO" id="GO:0005840">
    <property type="term" value="C:ribosome"/>
    <property type="evidence" value="ECO:0007669"/>
    <property type="project" value="UniProtKB-KW"/>
</dbReference>
<dbReference type="GO" id="GO:0003735">
    <property type="term" value="F:structural constituent of ribosome"/>
    <property type="evidence" value="ECO:0007669"/>
    <property type="project" value="InterPro"/>
</dbReference>
<dbReference type="GO" id="GO:0006412">
    <property type="term" value="P:translation"/>
    <property type="evidence" value="ECO:0007669"/>
    <property type="project" value="UniProtKB-UniRule"/>
</dbReference>
<dbReference type="Gene3D" id="1.20.5.1150">
    <property type="entry name" value="Ribosomal protein S8"/>
    <property type="match status" value="1"/>
</dbReference>
<dbReference type="HAMAP" id="MF_00358">
    <property type="entry name" value="Ribosomal_bS21"/>
    <property type="match status" value="1"/>
</dbReference>
<dbReference type="InterPro" id="IPR001911">
    <property type="entry name" value="Ribosomal_bS21"/>
</dbReference>
<dbReference type="InterPro" id="IPR018278">
    <property type="entry name" value="Ribosomal_bS21_CS"/>
</dbReference>
<dbReference type="InterPro" id="IPR038380">
    <property type="entry name" value="Ribosomal_bS21_sf"/>
</dbReference>
<dbReference type="NCBIfam" id="TIGR00030">
    <property type="entry name" value="S21p"/>
    <property type="match status" value="1"/>
</dbReference>
<dbReference type="PANTHER" id="PTHR21109">
    <property type="entry name" value="MITOCHONDRIAL 28S RIBOSOMAL PROTEIN S21"/>
    <property type="match status" value="1"/>
</dbReference>
<dbReference type="PANTHER" id="PTHR21109:SF22">
    <property type="entry name" value="SMALL RIBOSOMAL SUBUNIT PROTEIN BS21"/>
    <property type="match status" value="1"/>
</dbReference>
<dbReference type="Pfam" id="PF01165">
    <property type="entry name" value="Ribosomal_S21"/>
    <property type="match status" value="1"/>
</dbReference>
<dbReference type="PRINTS" id="PR00976">
    <property type="entry name" value="RIBOSOMALS21"/>
</dbReference>
<dbReference type="PROSITE" id="PS01181">
    <property type="entry name" value="RIBOSOMAL_S21"/>
    <property type="match status" value="1"/>
</dbReference>
<accession>C5CTG9</accession>
<reference key="1">
    <citation type="journal article" date="2011" name="J. Bacteriol.">
        <title>Complete genome sequence of the metabolically versatile plant growth-promoting endophyte, Variovorax paradoxus S110.</title>
        <authorList>
            <person name="Han J.I."/>
            <person name="Choi H.K."/>
            <person name="Lee S.W."/>
            <person name="Orwin P.M."/>
            <person name="Kim J."/>
            <person name="Laroe S.L."/>
            <person name="Kim T.G."/>
            <person name="O'Neil J."/>
            <person name="Leadbetter J.R."/>
            <person name="Lee S.Y."/>
            <person name="Hur C.G."/>
            <person name="Spain J.C."/>
            <person name="Ovchinnikova G."/>
            <person name="Goodwin L."/>
            <person name="Han C."/>
        </authorList>
    </citation>
    <scope>NUCLEOTIDE SEQUENCE [LARGE SCALE GENOMIC DNA]</scope>
    <source>
        <strain>S110</strain>
    </source>
</reference>
<feature type="chain" id="PRO_1000205379" description="Small ribosomal subunit protein bS21">
    <location>
        <begin position="1"/>
        <end position="70"/>
    </location>
</feature>
<name>RS21_VARPS</name>
<proteinExistence type="inferred from homology"/>
<keyword id="KW-0687">Ribonucleoprotein</keyword>
<keyword id="KW-0689">Ribosomal protein</keyword>
<protein>
    <recommendedName>
        <fullName evidence="1">Small ribosomal subunit protein bS21</fullName>
    </recommendedName>
    <alternativeName>
        <fullName evidence="2">30S ribosomal protein S21</fullName>
    </alternativeName>
</protein>
<organism>
    <name type="scientific">Variovorax paradoxus (strain S110)</name>
    <dbReference type="NCBI Taxonomy" id="543728"/>
    <lineage>
        <taxon>Bacteria</taxon>
        <taxon>Pseudomonadati</taxon>
        <taxon>Pseudomonadota</taxon>
        <taxon>Betaproteobacteria</taxon>
        <taxon>Burkholderiales</taxon>
        <taxon>Comamonadaceae</taxon>
        <taxon>Variovorax</taxon>
    </lineage>
</organism>